<name>MOAC_CAMLR</name>
<sequence length="157" mass="17295">MNLTHLDEKNHPKMVDVSQKNITQREACASGKIYMSKEAFEAIITNTAKKGPVLQTAITAAIMGAKQTSNLIPMCHPLMISKVQTHIEENKEECSFKLFVTVKCEGKTGVEMESLTAVSIGLLTIYDMIKAIDKSMQITDIVLESKEGGKSGKYLRS</sequence>
<keyword id="KW-0456">Lyase</keyword>
<keyword id="KW-0501">Molybdenum cofactor biosynthesis</keyword>
<keyword id="KW-1185">Reference proteome</keyword>
<feature type="chain" id="PRO_1000164882" description="Cyclic pyranopterin monophosphate synthase">
    <location>
        <begin position="1"/>
        <end position="157"/>
    </location>
</feature>
<feature type="active site" evidence="1">
    <location>
        <position position="127"/>
    </location>
</feature>
<feature type="binding site" evidence="1">
    <location>
        <begin position="74"/>
        <end position="76"/>
    </location>
    <ligand>
        <name>substrate</name>
    </ligand>
</feature>
<feature type="binding site" evidence="1">
    <location>
        <begin position="112"/>
        <end position="113"/>
    </location>
    <ligand>
        <name>substrate</name>
    </ligand>
</feature>
<evidence type="ECO:0000255" key="1">
    <source>
        <dbReference type="HAMAP-Rule" id="MF_01224"/>
    </source>
</evidence>
<comment type="function">
    <text evidence="1">Catalyzes the conversion of (8S)-3',8-cyclo-7,8-dihydroguanosine 5'-triphosphate to cyclic pyranopterin monophosphate (cPMP).</text>
</comment>
<comment type="catalytic activity">
    <reaction evidence="1">
        <text>(8S)-3',8-cyclo-7,8-dihydroguanosine 5'-triphosphate = cyclic pyranopterin phosphate + diphosphate</text>
        <dbReference type="Rhea" id="RHEA:49580"/>
        <dbReference type="ChEBI" id="CHEBI:33019"/>
        <dbReference type="ChEBI" id="CHEBI:59648"/>
        <dbReference type="ChEBI" id="CHEBI:131766"/>
        <dbReference type="EC" id="4.6.1.17"/>
    </reaction>
</comment>
<comment type="pathway">
    <text evidence="1">Cofactor biosynthesis; molybdopterin biosynthesis.</text>
</comment>
<comment type="subunit">
    <text evidence="1">Homohexamer; trimer of dimers.</text>
</comment>
<comment type="similarity">
    <text evidence="1">Belongs to the MoaC family.</text>
</comment>
<reference key="1">
    <citation type="journal article" date="2008" name="Foodborne Pathog. Dis.">
        <title>The complete genome sequence and analysis of the human pathogen Campylobacter lari.</title>
        <authorList>
            <person name="Miller W.G."/>
            <person name="Wang G."/>
            <person name="Binnewies T.T."/>
            <person name="Parker C.T."/>
        </authorList>
    </citation>
    <scope>NUCLEOTIDE SEQUENCE [LARGE SCALE GENOMIC DNA]</scope>
    <source>
        <strain>RM2100 / D67 / ATCC BAA-1060</strain>
    </source>
</reference>
<proteinExistence type="inferred from homology"/>
<protein>
    <recommendedName>
        <fullName evidence="1">Cyclic pyranopterin monophosphate synthase</fullName>
        <ecNumber evidence="1">4.6.1.17</ecNumber>
    </recommendedName>
    <alternativeName>
        <fullName evidence="1">Molybdenum cofactor biosynthesis protein C</fullName>
    </alternativeName>
</protein>
<dbReference type="EC" id="4.6.1.17" evidence="1"/>
<dbReference type="EMBL" id="CP000932">
    <property type="protein sequence ID" value="ACM63508.1"/>
    <property type="molecule type" value="Genomic_DNA"/>
</dbReference>
<dbReference type="RefSeq" id="WP_012660893.1">
    <property type="nucleotide sequence ID" value="NC_012039.1"/>
</dbReference>
<dbReference type="SMR" id="B9KEM3"/>
<dbReference type="STRING" id="306263.Cla_0145"/>
<dbReference type="KEGG" id="cla:CLA_0145"/>
<dbReference type="PATRIC" id="fig|306263.5.peg.144"/>
<dbReference type="eggNOG" id="COG0315">
    <property type="taxonomic scope" value="Bacteria"/>
</dbReference>
<dbReference type="HOGENOM" id="CLU_074693_1_1_7"/>
<dbReference type="UniPathway" id="UPA00344"/>
<dbReference type="Proteomes" id="UP000007727">
    <property type="component" value="Chromosome"/>
</dbReference>
<dbReference type="GO" id="GO:0061799">
    <property type="term" value="F:cyclic pyranopterin monophosphate synthase activity"/>
    <property type="evidence" value="ECO:0007669"/>
    <property type="project" value="UniProtKB-UniRule"/>
</dbReference>
<dbReference type="GO" id="GO:0061798">
    <property type="term" value="F:GTP 3',8'-cyclase activity"/>
    <property type="evidence" value="ECO:0007669"/>
    <property type="project" value="TreeGrafter"/>
</dbReference>
<dbReference type="GO" id="GO:0006777">
    <property type="term" value="P:Mo-molybdopterin cofactor biosynthetic process"/>
    <property type="evidence" value="ECO:0007669"/>
    <property type="project" value="UniProtKB-UniRule"/>
</dbReference>
<dbReference type="CDD" id="cd01420">
    <property type="entry name" value="MoaC_PE"/>
    <property type="match status" value="1"/>
</dbReference>
<dbReference type="Gene3D" id="3.30.70.640">
    <property type="entry name" value="Molybdopterin cofactor biosynthesis C (MoaC) domain"/>
    <property type="match status" value="1"/>
</dbReference>
<dbReference type="HAMAP" id="MF_01224_B">
    <property type="entry name" value="MoaC_B"/>
    <property type="match status" value="1"/>
</dbReference>
<dbReference type="InterPro" id="IPR023045">
    <property type="entry name" value="MoaC"/>
</dbReference>
<dbReference type="InterPro" id="IPR047594">
    <property type="entry name" value="MoaC_bact/euk"/>
</dbReference>
<dbReference type="InterPro" id="IPR036522">
    <property type="entry name" value="MoaC_sf"/>
</dbReference>
<dbReference type="InterPro" id="IPR050105">
    <property type="entry name" value="MoCo_biosynth_MoaA/MoaC"/>
</dbReference>
<dbReference type="InterPro" id="IPR002820">
    <property type="entry name" value="Mopterin_CF_biosynth-C_dom"/>
</dbReference>
<dbReference type="NCBIfam" id="TIGR00581">
    <property type="entry name" value="moaC"/>
    <property type="match status" value="1"/>
</dbReference>
<dbReference type="NCBIfam" id="NF006870">
    <property type="entry name" value="PRK09364.1"/>
    <property type="match status" value="1"/>
</dbReference>
<dbReference type="PANTHER" id="PTHR22960:SF0">
    <property type="entry name" value="MOLYBDENUM COFACTOR BIOSYNTHESIS PROTEIN 1"/>
    <property type="match status" value="1"/>
</dbReference>
<dbReference type="PANTHER" id="PTHR22960">
    <property type="entry name" value="MOLYBDOPTERIN COFACTOR SYNTHESIS PROTEIN A"/>
    <property type="match status" value="1"/>
</dbReference>
<dbReference type="Pfam" id="PF01967">
    <property type="entry name" value="MoaC"/>
    <property type="match status" value="1"/>
</dbReference>
<dbReference type="SUPFAM" id="SSF55040">
    <property type="entry name" value="Molybdenum cofactor biosynthesis protein C, MoaC"/>
    <property type="match status" value="1"/>
</dbReference>
<accession>B9KEM3</accession>
<gene>
    <name evidence="1" type="primary">moaC</name>
    <name type="ordered locus">Cla_0145</name>
</gene>
<organism>
    <name type="scientific">Campylobacter lari (strain RM2100 / D67 / ATCC BAA-1060)</name>
    <dbReference type="NCBI Taxonomy" id="306263"/>
    <lineage>
        <taxon>Bacteria</taxon>
        <taxon>Pseudomonadati</taxon>
        <taxon>Campylobacterota</taxon>
        <taxon>Epsilonproteobacteria</taxon>
        <taxon>Campylobacterales</taxon>
        <taxon>Campylobacteraceae</taxon>
        <taxon>Campylobacter</taxon>
    </lineage>
</organism>